<keyword id="KW-1003">Cell membrane</keyword>
<keyword id="KW-0472">Membrane</keyword>
<keyword id="KW-1185">Reference proteome</keyword>
<keyword id="KW-0812">Transmembrane</keyword>
<keyword id="KW-1133">Transmembrane helix</keyword>
<keyword id="KW-0813">Transport</keyword>
<name>YODF_BACSU</name>
<sequence>MQGNLTALLITAIIVLTVVCIGFLAGRDKSSRTSVEEWSVGGRRFGGLLVWFLVGADLYTAYTFLGLTSTAFTGGSVAFFAIPYSVLAYFIAYFFLPKLWKVAKIHKLTTLADYARERFNSKLLASLVAIVGVLMLIPYICLQLSGIQDTLQVAGTGYINVKFVVIISFILVALYTFFSGIKGPTYTAIIKDILVWVIMLFMVVSLPLIHFNGWTPMIDTLVKEAPQMLTIPSEGPKGIPWFITASIVSALALFMWAHAATGVFTAKSADAVRKNSMFLPLYNIVLILVIFLGFIAFLVLPEDTNPRLALLHLIQTSYGGVAQGFAYATIALASLIPCSIMAIGASNLFANNLYRDLIHPNVSQSKLTLVTRSMVFVVIGLALLFGMLFPTALVTLQLLGVSGMVQIFPAIAVSLFWKNQTKEATVIGLLAGLAVTFIVYITQSAHGIYEGFWGLAANMIAVVILNPLFVKNAGSNPVIEGLFGKKQDANPNQKGA</sequence>
<gene>
    <name type="primary">yodF</name>
    <name type="ordered locus">BSU19580</name>
</gene>
<accession>O34745</accession>
<accession>O30474</accession>
<accession>Q7BVL3</accession>
<dbReference type="EMBL" id="AF006665">
    <property type="protein sequence ID" value="AAB81169.1"/>
    <property type="molecule type" value="Genomic_DNA"/>
</dbReference>
<dbReference type="EMBL" id="AF015775">
    <property type="protein sequence ID" value="AAB72054.1"/>
    <property type="molecule type" value="Genomic_DNA"/>
</dbReference>
<dbReference type="EMBL" id="AL009126">
    <property type="protein sequence ID" value="CAB13849.1"/>
    <property type="molecule type" value="Genomic_DNA"/>
</dbReference>
<dbReference type="PIR" id="C69903">
    <property type="entry name" value="C69903"/>
</dbReference>
<dbReference type="RefSeq" id="NP_389839.1">
    <property type="nucleotide sequence ID" value="NC_000964.3"/>
</dbReference>
<dbReference type="RefSeq" id="WP_004399269.1">
    <property type="nucleotide sequence ID" value="NZ_OZ025638.1"/>
</dbReference>
<dbReference type="SMR" id="O34745"/>
<dbReference type="FunCoup" id="O34745">
    <property type="interactions" value="47"/>
</dbReference>
<dbReference type="STRING" id="224308.BSU19580"/>
<dbReference type="TCDB" id="2.A.21.4.2">
    <property type="family name" value="the solute:sodium symporter (sss) family"/>
</dbReference>
<dbReference type="PaxDb" id="224308-BSU19580"/>
<dbReference type="EnsemblBacteria" id="CAB13849">
    <property type="protein sequence ID" value="CAB13849"/>
    <property type="gene ID" value="BSU_19580"/>
</dbReference>
<dbReference type="GeneID" id="940028"/>
<dbReference type="KEGG" id="bsu:BSU19580"/>
<dbReference type="PATRIC" id="fig|224308.179.peg.2141"/>
<dbReference type="eggNOG" id="COG0591">
    <property type="taxonomic scope" value="Bacteria"/>
</dbReference>
<dbReference type="InParanoid" id="O34745"/>
<dbReference type="OrthoDB" id="9810181at2"/>
<dbReference type="PhylomeDB" id="O34745"/>
<dbReference type="BioCyc" id="BSUB:BSU19580-MONOMER"/>
<dbReference type="Proteomes" id="UP000001570">
    <property type="component" value="Chromosome"/>
</dbReference>
<dbReference type="GO" id="GO:0005886">
    <property type="term" value="C:plasma membrane"/>
    <property type="evidence" value="ECO:0000318"/>
    <property type="project" value="GO_Central"/>
</dbReference>
<dbReference type="GO" id="GO:0022857">
    <property type="term" value="F:transmembrane transporter activity"/>
    <property type="evidence" value="ECO:0000318"/>
    <property type="project" value="GO_Central"/>
</dbReference>
<dbReference type="GO" id="GO:0055085">
    <property type="term" value="P:transmembrane transport"/>
    <property type="evidence" value="ECO:0000318"/>
    <property type="project" value="GO_Central"/>
</dbReference>
<dbReference type="CDD" id="cd10322">
    <property type="entry name" value="SLC5sbd"/>
    <property type="match status" value="1"/>
</dbReference>
<dbReference type="Gene3D" id="1.20.1730.10">
    <property type="entry name" value="Sodium/glucose cotransporter"/>
    <property type="match status" value="1"/>
</dbReference>
<dbReference type="InterPro" id="IPR038377">
    <property type="entry name" value="Na/Glc_symporter_sf"/>
</dbReference>
<dbReference type="InterPro" id="IPR001734">
    <property type="entry name" value="Na/solute_symporter"/>
</dbReference>
<dbReference type="InterPro" id="IPR050277">
    <property type="entry name" value="Sodium:Solute_Symporter"/>
</dbReference>
<dbReference type="PANTHER" id="PTHR48086:SF8">
    <property type="entry name" value="MONOCARBOXYLIC ACID PERMEASE"/>
    <property type="match status" value="1"/>
</dbReference>
<dbReference type="PANTHER" id="PTHR48086">
    <property type="entry name" value="SODIUM/PROLINE SYMPORTER-RELATED"/>
    <property type="match status" value="1"/>
</dbReference>
<dbReference type="Pfam" id="PF00474">
    <property type="entry name" value="SSF"/>
    <property type="match status" value="1"/>
</dbReference>
<dbReference type="PROSITE" id="PS50283">
    <property type="entry name" value="NA_SOLUT_SYMP_3"/>
    <property type="match status" value="1"/>
</dbReference>
<comment type="subcellular location">
    <subcellularLocation>
        <location evidence="2">Cell membrane</location>
        <topology evidence="2">Multi-pass membrane protein</topology>
    </subcellularLocation>
</comment>
<comment type="induction">
    <text>Negatively regulated by TnrA under nitrogen-limited conditions.</text>
</comment>
<comment type="similarity">
    <text evidence="2">Belongs to the sodium:solute symporter (SSF) (TC 2.A.21) family.</text>
</comment>
<organism>
    <name type="scientific">Bacillus subtilis (strain 168)</name>
    <dbReference type="NCBI Taxonomy" id="224308"/>
    <lineage>
        <taxon>Bacteria</taxon>
        <taxon>Bacillati</taxon>
        <taxon>Bacillota</taxon>
        <taxon>Bacilli</taxon>
        <taxon>Bacillales</taxon>
        <taxon>Bacillaceae</taxon>
        <taxon>Bacillus</taxon>
    </lineage>
</organism>
<reference key="1">
    <citation type="journal article" date="1998" name="DNA Res.">
        <title>Sequence analysis of the Bacillus subtilis 168 chromosome region between the sspC and odhA loci (184 degrees-180 degrees).</title>
        <authorList>
            <person name="Ghim S.-Y."/>
            <person name="Choi S.-K."/>
            <person name="Shin B.-S."/>
            <person name="Jeong Y.-M."/>
            <person name="Sorokin A."/>
            <person name="Ehrlich S.D."/>
            <person name="Park S.-H."/>
        </authorList>
    </citation>
    <scope>NUCLEOTIDE SEQUENCE [GENOMIC DNA]</scope>
    <source>
        <strain>168</strain>
    </source>
</reference>
<reference key="2">
    <citation type="journal article" date="1997" name="Nature">
        <title>The complete genome sequence of the Gram-positive bacterium Bacillus subtilis.</title>
        <authorList>
            <person name="Kunst F."/>
            <person name="Ogasawara N."/>
            <person name="Moszer I."/>
            <person name="Albertini A.M."/>
            <person name="Alloni G."/>
            <person name="Azevedo V."/>
            <person name="Bertero M.G."/>
            <person name="Bessieres P."/>
            <person name="Bolotin A."/>
            <person name="Borchert S."/>
            <person name="Borriss R."/>
            <person name="Boursier L."/>
            <person name="Brans A."/>
            <person name="Braun M."/>
            <person name="Brignell S.C."/>
            <person name="Bron S."/>
            <person name="Brouillet S."/>
            <person name="Bruschi C.V."/>
            <person name="Caldwell B."/>
            <person name="Capuano V."/>
            <person name="Carter N.M."/>
            <person name="Choi S.-K."/>
            <person name="Codani J.-J."/>
            <person name="Connerton I.F."/>
            <person name="Cummings N.J."/>
            <person name="Daniel R.A."/>
            <person name="Denizot F."/>
            <person name="Devine K.M."/>
            <person name="Duesterhoeft A."/>
            <person name="Ehrlich S.D."/>
            <person name="Emmerson P.T."/>
            <person name="Entian K.-D."/>
            <person name="Errington J."/>
            <person name="Fabret C."/>
            <person name="Ferrari E."/>
            <person name="Foulger D."/>
            <person name="Fritz C."/>
            <person name="Fujita M."/>
            <person name="Fujita Y."/>
            <person name="Fuma S."/>
            <person name="Galizzi A."/>
            <person name="Galleron N."/>
            <person name="Ghim S.-Y."/>
            <person name="Glaser P."/>
            <person name="Goffeau A."/>
            <person name="Golightly E.J."/>
            <person name="Grandi G."/>
            <person name="Guiseppi G."/>
            <person name="Guy B.J."/>
            <person name="Haga K."/>
            <person name="Haiech J."/>
            <person name="Harwood C.R."/>
            <person name="Henaut A."/>
            <person name="Hilbert H."/>
            <person name="Holsappel S."/>
            <person name="Hosono S."/>
            <person name="Hullo M.-F."/>
            <person name="Itaya M."/>
            <person name="Jones L.-M."/>
            <person name="Joris B."/>
            <person name="Karamata D."/>
            <person name="Kasahara Y."/>
            <person name="Klaerr-Blanchard M."/>
            <person name="Klein C."/>
            <person name="Kobayashi Y."/>
            <person name="Koetter P."/>
            <person name="Koningstein G."/>
            <person name="Krogh S."/>
            <person name="Kumano M."/>
            <person name="Kurita K."/>
            <person name="Lapidus A."/>
            <person name="Lardinois S."/>
            <person name="Lauber J."/>
            <person name="Lazarevic V."/>
            <person name="Lee S.-M."/>
            <person name="Levine A."/>
            <person name="Liu H."/>
            <person name="Masuda S."/>
            <person name="Mauel C."/>
            <person name="Medigue C."/>
            <person name="Medina N."/>
            <person name="Mellado R.P."/>
            <person name="Mizuno M."/>
            <person name="Moestl D."/>
            <person name="Nakai S."/>
            <person name="Noback M."/>
            <person name="Noone D."/>
            <person name="O'Reilly M."/>
            <person name="Ogawa K."/>
            <person name="Ogiwara A."/>
            <person name="Oudega B."/>
            <person name="Park S.-H."/>
            <person name="Parro V."/>
            <person name="Pohl T.M."/>
            <person name="Portetelle D."/>
            <person name="Porwollik S."/>
            <person name="Prescott A.M."/>
            <person name="Presecan E."/>
            <person name="Pujic P."/>
            <person name="Purnelle B."/>
            <person name="Rapoport G."/>
            <person name="Rey M."/>
            <person name="Reynolds S."/>
            <person name="Rieger M."/>
            <person name="Rivolta C."/>
            <person name="Rocha E."/>
            <person name="Roche B."/>
            <person name="Rose M."/>
            <person name="Sadaie Y."/>
            <person name="Sato T."/>
            <person name="Scanlan E."/>
            <person name="Schleich S."/>
            <person name="Schroeter R."/>
            <person name="Scoffone F."/>
            <person name="Sekiguchi J."/>
            <person name="Sekowska A."/>
            <person name="Seror S.J."/>
            <person name="Serror P."/>
            <person name="Shin B.-S."/>
            <person name="Soldo B."/>
            <person name="Sorokin A."/>
            <person name="Tacconi E."/>
            <person name="Takagi T."/>
            <person name="Takahashi H."/>
            <person name="Takemaru K."/>
            <person name="Takeuchi M."/>
            <person name="Tamakoshi A."/>
            <person name="Tanaka T."/>
            <person name="Terpstra P."/>
            <person name="Tognoni A."/>
            <person name="Tosato V."/>
            <person name="Uchiyama S."/>
            <person name="Vandenbol M."/>
            <person name="Vannier F."/>
            <person name="Vassarotti A."/>
            <person name="Viari A."/>
            <person name="Wambutt R."/>
            <person name="Wedler E."/>
            <person name="Wedler H."/>
            <person name="Weitzenegger T."/>
            <person name="Winters P."/>
            <person name="Wipat A."/>
            <person name="Yamamoto H."/>
            <person name="Yamane K."/>
            <person name="Yasumoto K."/>
            <person name="Yata K."/>
            <person name="Yoshida K."/>
            <person name="Yoshikawa H.-F."/>
            <person name="Zumstein E."/>
            <person name="Yoshikawa H."/>
            <person name="Danchin A."/>
        </authorList>
    </citation>
    <scope>NUCLEOTIDE SEQUENCE [LARGE SCALE GENOMIC DNA]</scope>
    <source>
        <strain>168</strain>
    </source>
</reference>
<reference key="3">
    <citation type="journal article" date="2003" name="Mol. Microbiol.">
        <title>Identification of additional TnrA-regulated genes of Bacillus subtilis associated with a TnrA box.</title>
        <authorList>
            <person name="Yoshida K."/>
            <person name="Yamaguchi H."/>
            <person name="Kinehara M."/>
            <person name="Ohki Y.-H."/>
            <person name="Nakaura Y."/>
            <person name="Fujita Y."/>
        </authorList>
    </citation>
    <scope>REGULATION BY TNRA</scope>
</reference>
<proteinExistence type="evidence at transcript level"/>
<protein>
    <recommendedName>
        <fullName>Uncharacterized symporter YodF</fullName>
    </recommendedName>
</protein>
<feature type="chain" id="PRO_0000377431" description="Uncharacterized symporter YodF">
    <location>
        <begin position="1"/>
        <end position="496"/>
    </location>
</feature>
<feature type="transmembrane region" description="Helical" evidence="1">
    <location>
        <begin position="5"/>
        <end position="25"/>
    </location>
</feature>
<feature type="transmembrane region" description="Helical" evidence="1">
    <location>
        <begin position="45"/>
        <end position="65"/>
    </location>
</feature>
<feature type="transmembrane region" description="Helical" evidence="1">
    <location>
        <begin position="77"/>
        <end position="97"/>
    </location>
</feature>
<feature type="transmembrane region" description="Helical" evidence="1">
    <location>
        <begin position="127"/>
        <end position="147"/>
    </location>
</feature>
<feature type="transmembrane region" description="Helical" evidence="1">
    <location>
        <begin position="161"/>
        <end position="181"/>
    </location>
</feature>
<feature type="transmembrane region" description="Helical" evidence="1">
    <location>
        <begin position="193"/>
        <end position="213"/>
    </location>
</feature>
<feature type="transmembrane region" description="Helical" evidence="1">
    <location>
        <begin position="239"/>
        <end position="259"/>
    </location>
</feature>
<feature type="transmembrane region" description="Helical" evidence="1">
    <location>
        <begin position="278"/>
        <end position="298"/>
    </location>
</feature>
<feature type="transmembrane region" description="Helical" evidence="1">
    <location>
        <begin position="325"/>
        <end position="345"/>
    </location>
</feature>
<feature type="transmembrane region" description="Helical" evidence="1">
    <location>
        <begin position="374"/>
        <end position="394"/>
    </location>
</feature>
<feature type="transmembrane region" description="Helical" evidence="1">
    <location>
        <begin position="396"/>
        <end position="416"/>
    </location>
</feature>
<feature type="transmembrane region" description="Helical" evidence="1">
    <location>
        <begin position="424"/>
        <end position="444"/>
    </location>
</feature>
<feature type="transmembrane region" description="Helical" evidence="1">
    <location>
        <begin position="450"/>
        <end position="470"/>
    </location>
</feature>
<feature type="sequence conflict" description="In Ref. 1; AAB81169." evidence="2" ref="1">
    <original>A</original>
    <variation>T</variation>
    <location>
        <position position="71"/>
    </location>
</feature>
<evidence type="ECO:0000255" key="1"/>
<evidence type="ECO:0000305" key="2"/>